<protein>
    <recommendedName>
        <fullName evidence="1">Protein Syd</fullName>
    </recommendedName>
</protein>
<comment type="function">
    <text evidence="1">Interacts with the SecY protein in vivo. May bind preferentially to an uncomplexed state of SecY, thus functioning either as a chelating agent for excess SecY in the cell or as a regulatory factor that negatively controls the translocase function.</text>
</comment>
<comment type="subcellular location">
    <subcellularLocation>
        <location evidence="1">Cell inner membrane</location>
        <topology evidence="1">Peripheral membrane protein</topology>
        <orientation evidence="1">Cytoplasmic side</orientation>
    </subcellularLocation>
    <text evidence="1">Loosely associated with the cytoplasmic side of the inner membrane, probably via SecY.</text>
</comment>
<comment type="similarity">
    <text evidence="1">Belongs to the Syd family.</text>
</comment>
<organism>
    <name type="scientific">Shewanella denitrificans (strain OS217 / ATCC BAA-1090 / DSM 15013)</name>
    <dbReference type="NCBI Taxonomy" id="318161"/>
    <lineage>
        <taxon>Bacteria</taxon>
        <taxon>Pseudomonadati</taxon>
        <taxon>Pseudomonadota</taxon>
        <taxon>Gammaproteobacteria</taxon>
        <taxon>Alteromonadales</taxon>
        <taxon>Shewanellaceae</taxon>
        <taxon>Shewanella</taxon>
    </lineage>
</organism>
<proteinExistence type="inferred from homology"/>
<name>SYDP_SHEDO</name>
<feature type="chain" id="PRO_0000298258" description="Protein Syd">
    <location>
        <begin position="1"/>
        <end position="218"/>
    </location>
</feature>
<sequence length="218" mass="24857">MSCSSALEKFINSYLNSYQNALSELPRYYPMGVASPCIAQTFDEQSEDAVFWQPVKREPAGDFDNVASALAITLHQDINHFYASFFSAPLQFNSPWGEGELLLAWSLEDFEYLQQNIIGHLLMKQKLKQAPTWFIGVLSDGDTMITVENDTGAVWIEVPGEVPKQQLAPSIAEFITQLSPRITPAIKPVQEVDPQWQHPGIWQRMKLMWRDLTHRSRK</sequence>
<gene>
    <name evidence="1" type="primary">syd</name>
    <name type="ordered locus">Sden_1514</name>
</gene>
<reference key="1">
    <citation type="submission" date="2006-03" db="EMBL/GenBank/DDBJ databases">
        <title>Complete sequence of Shewanella denitrificans OS217.</title>
        <authorList>
            <consortium name="US DOE Joint Genome Institute"/>
            <person name="Copeland A."/>
            <person name="Lucas S."/>
            <person name="Lapidus A."/>
            <person name="Barry K."/>
            <person name="Detter J.C."/>
            <person name="Glavina del Rio T."/>
            <person name="Hammon N."/>
            <person name="Israni S."/>
            <person name="Dalin E."/>
            <person name="Tice H."/>
            <person name="Pitluck S."/>
            <person name="Brettin T."/>
            <person name="Bruce D."/>
            <person name="Han C."/>
            <person name="Tapia R."/>
            <person name="Gilna P."/>
            <person name="Kiss H."/>
            <person name="Schmutz J."/>
            <person name="Larimer F."/>
            <person name="Land M."/>
            <person name="Hauser L."/>
            <person name="Kyrpides N."/>
            <person name="Lykidis A."/>
            <person name="Richardson P."/>
        </authorList>
    </citation>
    <scope>NUCLEOTIDE SEQUENCE [LARGE SCALE GENOMIC DNA]</scope>
    <source>
        <strain>OS217 / ATCC BAA-1090 / DSM 15013</strain>
    </source>
</reference>
<dbReference type="EMBL" id="CP000302">
    <property type="protein sequence ID" value="ABE54799.1"/>
    <property type="molecule type" value="Genomic_DNA"/>
</dbReference>
<dbReference type="RefSeq" id="WP_011495957.1">
    <property type="nucleotide sequence ID" value="NC_007954.1"/>
</dbReference>
<dbReference type="SMR" id="Q12P27"/>
<dbReference type="STRING" id="318161.Sden_1514"/>
<dbReference type="KEGG" id="sdn:Sden_1514"/>
<dbReference type="eggNOG" id="ENOG502ZCMR">
    <property type="taxonomic scope" value="Bacteria"/>
</dbReference>
<dbReference type="HOGENOM" id="CLU_121866_0_0_6"/>
<dbReference type="OrthoDB" id="5599437at2"/>
<dbReference type="Proteomes" id="UP000001982">
    <property type="component" value="Chromosome"/>
</dbReference>
<dbReference type="GO" id="GO:0009898">
    <property type="term" value="C:cytoplasmic side of plasma membrane"/>
    <property type="evidence" value="ECO:0007669"/>
    <property type="project" value="InterPro"/>
</dbReference>
<dbReference type="CDD" id="cd16323">
    <property type="entry name" value="Syd"/>
    <property type="match status" value="1"/>
</dbReference>
<dbReference type="Gene3D" id="3.40.1580.20">
    <property type="entry name" value="Syd protein"/>
    <property type="match status" value="1"/>
</dbReference>
<dbReference type="HAMAP" id="MF_01104">
    <property type="entry name" value="Syd"/>
    <property type="match status" value="1"/>
</dbReference>
<dbReference type="InterPro" id="IPR009948">
    <property type="entry name" value="Syd"/>
</dbReference>
<dbReference type="InterPro" id="IPR038228">
    <property type="entry name" value="Syd_sf"/>
</dbReference>
<dbReference type="NCBIfam" id="NF003439">
    <property type="entry name" value="PRK04968.1"/>
    <property type="match status" value="1"/>
</dbReference>
<dbReference type="Pfam" id="PF07348">
    <property type="entry name" value="Syd"/>
    <property type="match status" value="1"/>
</dbReference>
<accession>Q12P27</accession>
<evidence type="ECO:0000255" key="1">
    <source>
        <dbReference type="HAMAP-Rule" id="MF_01104"/>
    </source>
</evidence>
<keyword id="KW-0997">Cell inner membrane</keyword>
<keyword id="KW-1003">Cell membrane</keyword>
<keyword id="KW-0472">Membrane</keyword>
<keyword id="KW-1185">Reference proteome</keyword>